<protein>
    <recommendedName>
        <fullName evidence="1">Probable cytosol aminopeptidase</fullName>
        <ecNumber evidence="1">3.4.11.1</ecNumber>
    </recommendedName>
    <alternativeName>
        <fullName evidence="1">Leucine aminopeptidase</fullName>
        <shortName evidence="1">LAP</shortName>
        <ecNumber evidence="1">3.4.11.10</ecNumber>
    </alternativeName>
    <alternativeName>
        <fullName evidence="1">Leucyl aminopeptidase</fullName>
    </alternativeName>
</protein>
<dbReference type="EC" id="3.4.11.1" evidence="1"/>
<dbReference type="EC" id="3.4.11.10" evidence="1"/>
<dbReference type="EMBL" id="CP001157">
    <property type="protein sequence ID" value="ACO77394.1"/>
    <property type="molecule type" value="Genomic_DNA"/>
</dbReference>
<dbReference type="RefSeq" id="WP_012699815.1">
    <property type="nucleotide sequence ID" value="NC_012560.1"/>
</dbReference>
<dbReference type="SMR" id="C1DPG2"/>
<dbReference type="STRING" id="322710.Avin_11650"/>
<dbReference type="MEROPS" id="M17.003"/>
<dbReference type="EnsemblBacteria" id="ACO77394">
    <property type="protein sequence ID" value="ACO77394"/>
    <property type="gene ID" value="Avin_11650"/>
</dbReference>
<dbReference type="GeneID" id="88184495"/>
<dbReference type="KEGG" id="avn:Avin_11650"/>
<dbReference type="eggNOG" id="COG0260">
    <property type="taxonomic scope" value="Bacteria"/>
</dbReference>
<dbReference type="HOGENOM" id="CLU_013734_2_2_6"/>
<dbReference type="OrthoDB" id="9809354at2"/>
<dbReference type="Proteomes" id="UP000002424">
    <property type="component" value="Chromosome"/>
</dbReference>
<dbReference type="GO" id="GO:0005737">
    <property type="term" value="C:cytoplasm"/>
    <property type="evidence" value="ECO:0007669"/>
    <property type="project" value="UniProtKB-SubCell"/>
</dbReference>
<dbReference type="GO" id="GO:0030145">
    <property type="term" value="F:manganese ion binding"/>
    <property type="evidence" value="ECO:0007669"/>
    <property type="project" value="UniProtKB-UniRule"/>
</dbReference>
<dbReference type="GO" id="GO:0070006">
    <property type="term" value="F:metalloaminopeptidase activity"/>
    <property type="evidence" value="ECO:0007669"/>
    <property type="project" value="InterPro"/>
</dbReference>
<dbReference type="GO" id="GO:0006508">
    <property type="term" value="P:proteolysis"/>
    <property type="evidence" value="ECO:0007669"/>
    <property type="project" value="UniProtKB-KW"/>
</dbReference>
<dbReference type="CDD" id="cd00433">
    <property type="entry name" value="Peptidase_M17"/>
    <property type="match status" value="1"/>
</dbReference>
<dbReference type="FunFam" id="3.40.630.10:FF:000004">
    <property type="entry name" value="Probable cytosol aminopeptidase"/>
    <property type="match status" value="1"/>
</dbReference>
<dbReference type="Gene3D" id="3.40.220.10">
    <property type="entry name" value="Leucine Aminopeptidase, subunit E, domain 1"/>
    <property type="match status" value="1"/>
</dbReference>
<dbReference type="Gene3D" id="3.40.630.10">
    <property type="entry name" value="Zn peptidases"/>
    <property type="match status" value="1"/>
</dbReference>
<dbReference type="HAMAP" id="MF_00181">
    <property type="entry name" value="Cytosol_peptidase_M17"/>
    <property type="match status" value="1"/>
</dbReference>
<dbReference type="InterPro" id="IPR011356">
    <property type="entry name" value="Leucine_aapep/pepB"/>
</dbReference>
<dbReference type="InterPro" id="IPR043472">
    <property type="entry name" value="Macro_dom-like"/>
</dbReference>
<dbReference type="InterPro" id="IPR000819">
    <property type="entry name" value="Peptidase_M17_C"/>
</dbReference>
<dbReference type="InterPro" id="IPR023042">
    <property type="entry name" value="Peptidase_M17_leu_NH2_pept"/>
</dbReference>
<dbReference type="InterPro" id="IPR008283">
    <property type="entry name" value="Peptidase_M17_N"/>
</dbReference>
<dbReference type="NCBIfam" id="NF002073">
    <property type="entry name" value="PRK00913.1-2"/>
    <property type="match status" value="1"/>
</dbReference>
<dbReference type="NCBIfam" id="NF002074">
    <property type="entry name" value="PRK00913.1-4"/>
    <property type="match status" value="1"/>
</dbReference>
<dbReference type="NCBIfam" id="NF002077">
    <property type="entry name" value="PRK00913.2-4"/>
    <property type="match status" value="1"/>
</dbReference>
<dbReference type="NCBIfam" id="NF002083">
    <property type="entry name" value="PRK00913.3-5"/>
    <property type="match status" value="1"/>
</dbReference>
<dbReference type="PANTHER" id="PTHR11963:SF23">
    <property type="entry name" value="CYTOSOL AMINOPEPTIDASE"/>
    <property type="match status" value="1"/>
</dbReference>
<dbReference type="PANTHER" id="PTHR11963">
    <property type="entry name" value="LEUCINE AMINOPEPTIDASE-RELATED"/>
    <property type="match status" value="1"/>
</dbReference>
<dbReference type="Pfam" id="PF00883">
    <property type="entry name" value="Peptidase_M17"/>
    <property type="match status" value="1"/>
</dbReference>
<dbReference type="Pfam" id="PF02789">
    <property type="entry name" value="Peptidase_M17_N"/>
    <property type="match status" value="1"/>
</dbReference>
<dbReference type="PRINTS" id="PR00481">
    <property type="entry name" value="LAMNOPPTDASE"/>
</dbReference>
<dbReference type="SUPFAM" id="SSF52949">
    <property type="entry name" value="Macro domain-like"/>
    <property type="match status" value="1"/>
</dbReference>
<dbReference type="SUPFAM" id="SSF53187">
    <property type="entry name" value="Zn-dependent exopeptidases"/>
    <property type="match status" value="1"/>
</dbReference>
<dbReference type="PROSITE" id="PS00631">
    <property type="entry name" value="CYTOSOL_AP"/>
    <property type="match status" value="1"/>
</dbReference>
<reference key="1">
    <citation type="journal article" date="2009" name="J. Bacteriol.">
        <title>Genome sequence of Azotobacter vinelandii, an obligate aerobe specialized to support diverse anaerobic metabolic processes.</title>
        <authorList>
            <person name="Setubal J.C."/>
            <person name="Dos Santos P."/>
            <person name="Goldman B.S."/>
            <person name="Ertesvaag H."/>
            <person name="Espin G."/>
            <person name="Rubio L.M."/>
            <person name="Valla S."/>
            <person name="Almeida N.F."/>
            <person name="Balasubramanian D."/>
            <person name="Cromes L."/>
            <person name="Curatti L."/>
            <person name="Du Z."/>
            <person name="Godsy E."/>
            <person name="Goodner B."/>
            <person name="Hellner-Burris K."/>
            <person name="Hernandez J.A."/>
            <person name="Houmiel K."/>
            <person name="Imperial J."/>
            <person name="Kennedy C."/>
            <person name="Larson T.J."/>
            <person name="Latreille P."/>
            <person name="Ligon L.S."/>
            <person name="Lu J."/>
            <person name="Maerk M."/>
            <person name="Miller N.M."/>
            <person name="Norton S."/>
            <person name="O'Carroll I.P."/>
            <person name="Paulsen I."/>
            <person name="Raulfs E.C."/>
            <person name="Roemer R."/>
            <person name="Rosser J."/>
            <person name="Segura D."/>
            <person name="Slater S."/>
            <person name="Stricklin S.L."/>
            <person name="Studholme D.J."/>
            <person name="Sun J."/>
            <person name="Viana C.J."/>
            <person name="Wallin E."/>
            <person name="Wang B."/>
            <person name="Wheeler C."/>
            <person name="Zhu H."/>
            <person name="Dean D.R."/>
            <person name="Dixon R."/>
            <person name="Wood D."/>
        </authorList>
    </citation>
    <scope>NUCLEOTIDE SEQUENCE [LARGE SCALE GENOMIC DNA]</scope>
    <source>
        <strain>DJ / ATCC BAA-1303</strain>
    </source>
</reference>
<keyword id="KW-0031">Aminopeptidase</keyword>
<keyword id="KW-0963">Cytoplasm</keyword>
<keyword id="KW-0378">Hydrolase</keyword>
<keyword id="KW-0464">Manganese</keyword>
<keyword id="KW-0479">Metal-binding</keyword>
<keyword id="KW-0645">Protease</keyword>
<sequence length="496" mass="52115">MQLVVKSTSPQTLKTATLVVAVGEGRKLGATAKAIDQAADGALSAALKRGDLAGKVGQTLLLHAVPNLKAERVLLVGAGKEGELSDRQFRKIAAATYGALKGLGGSDAALTLGELQVKGRDTYGKTRLLAETLLDATYAFDRFKSEKASAPVLKKLVLLCDKAGQAEVERAASHAQAIVDGMALTRDLGNLPPNLCHPTSLASEAKALAKTYDTLKVEVLDEKKLKELGMGAFLAVAQGSDQPPRLIVLDYQGGKKDEQPFVLVGKGITFDSGGISLKPGSGMDEMKYDMCGAASVLGTFRALLELALPINVVGLLACAENMPSGGATRPGDIVTSMSGQTVEILNTDAEGRLVLCDALTYAERFKPQAVIDIATLTGACITALGTQASGLMGNDDDLIRQVLEAGEHAADRAWQLPLFEEYQEQLDSPFADMANIGGPKAGTITAACFLSRFAKNYHWAHLDIAGTAWISGGKEKGATGRPVPLLTQFLLDRSAP</sequence>
<gene>
    <name evidence="1" type="primary">pepA</name>
    <name type="ordered locus">Avin_11650</name>
</gene>
<name>AMPA_AZOVD</name>
<proteinExistence type="inferred from homology"/>
<accession>C1DPG2</accession>
<organism>
    <name type="scientific">Azotobacter vinelandii (strain DJ / ATCC BAA-1303)</name>
    <dbReference type="NCBI Taxonomy" id="322710"/>
    <lineage>
        <taxon>Bacteria</taxon>
        <taxon>Pseudomonadati</taxon>
        <taxon>Pseudomonadota</taxon>
        <taxon>Gammaproteobacteria</taxon>
        <taxon>Pseudomonadales</taxon>
        <taxon>Pseudomonadaceae</taxon>
        <taxon>Azotobacter</taxon>
    </lineage>
</organism>
<evidence type="ECO:0000255" key="1">
    <source>
        <dbReference type="HAMAP-Rule" id="MF_00181"/>
    </source>
</evidence>
<feature type="chain" id="PRO_1000203824" description="Probable cytosol aminopeptidase">
    <location>
        <begin position="1"/>
        <end position="496"/>
    </location>
</feature>
<feature type="active site" evidence="1">
    <location>
        <position position="278"/>
    </location>
</feature>
<feature type="active site" evidence="1">
    <location>
        <position position="352"/>
    </location>
</feature>
<feature type="binding site" evidence="1">
    <location>
        <position position="266"/>
    </location>
    <ligand>
        <name>Mn(2+)</name>
        <dbReference type="ChEBI" id="CHEBI:29035"/>
        <label>2</label>
    </ligand>
</feature>
<feature type="binding site" evidence="1">
    <location>
        <position position="271"/>
    </location>
    <ligand>
        <name>Mn(2+)</name>
        <dbReference type="ChEBI" id="CHEBI:29035"/>
        <label>1</label>
    </ligand>
</feature>
<feature type="binding site" evidence="1">
    <location>
        <position position="271"/>
    </location>
    <ligand>
        <name>Mn(2+)</name>
        <dbReference type="ChEBI" id="CHEBI:29035"/>
        <label>2</label>
    </ligand>
</feature>
<feature type="binding site" evidence="1">
    <location>
        <position position="289"/>
    </location>
    <ligand>
        <name>Mn(2+)</name>
        <dbReference type="ChEBI" id="CHEBI:29035"/>
        <label>2</label>
    </ligand>
</feature>
<feature type="binding site" evidence="1">
    <location>
        <position position="348"/>
    </location>
    <ligand>
        <name>Mn(2+)</name>
        <dbReference type="ChEBI" id="CHEBI:29035"/>
        <label>1</label>
    </ligand>
</feature>
<feature type="binding site" evidence="1">
    <location>
        <position position="350"/>
    </location>
    <ligand>
        <name>Mn(2+)</name>
        <dbReference type="ChEBI" id="CHEBI:29035"/>
        <label>1</label>
    </ligand>
</feature>
<feature type="binding site" evidence="1">
    <location>
        <position position="350"/>
    </location>
    <ligand>
        <name>Mn(2+)</name>
        <dbReference type="ChEBI" id="CHEBI:29035"/>
        <label>2</label>
    </ligand>
</feature>
<comment type="function">
    <text evidence="1">Presumably involved in the processing and regular turnover of intracellular proteins. Catalyzes the removal of unsubstituted N-terminal amino acids from various peptides.</text>
</comment>
<comment type="catalytic activity">
    <reaction evidence="1">
        <text>Release of an N-terminal amino acid, Xaa-|-Yaa-, in which Xaa is preferably Leu, but may be other amino acids including Pro although not Arg or Lys, and Yaa may be Pro. Amino acid amides and methyl esters are also readily hydrolyzed, but rates on arylamides are exceedingly low.</text>
        <dbReference type="EC" id="3.4.11.1"/>
    </reaction>
</comment>
<comment type="catalytic activity">
    <reaction evidence="1">
        <text>Release of an N-terminal amino acid, preferentially leucine, but not glutamic or aspartic acids.</text>
        <dbReference type="EC" id="3.4.11.10"/>
    </reaction>
</comment>
<comment type="cofactor">
    <cofactor evidence="1">
        <name>Mn(2+)</name>
        <dbReference type="ChEBI" id="CHEBI:29035"/>
    </cofactor>
    <text evidence="1">Binds 2 manganese ions per subunit.</text>
</comment>
<comment type="subcellular location">
    <subcellularLocation>
        <location evidence="1">Cytoplasm</location>
    </subcellularLocation>
</comment>
<comment type="similarity">
    <text evidence="1">Belongs to the peptidase M17 family.</text>
</comment>